<dbReference type="EMBL" id="U18421">
    <property type="protein sequence ID" value="AAA87721.1"/>
    <property type="molecule type" value="Genomic_DNA"/>
</dbReference>
<dbReference type="EMBL" id="AF015775">
    <property type="protein sequence ID" value="AAB72058.1"/>
    <property type="molecule type" value="Genomic_DNA"/>
</dbReference>
<dbReference type="EMBL" id="AF006665">
    <property type="protein sequence ID" value="AAB81149.1"/>
    <property type="molecule type" value="Genomic_DNA"/>
</dbReference>
<dbReference type="EMBL" id="AL009126">
    <property type="protein sequence ID" value="CAB13870.2"/>
    <property type="molecule type" value="Genomic_DNA"/>
</dbReference>
<dbReference type="PIR" id="A69598">
    <property type="entry name" value="A69598"/>
</dbReference>
<dbReference type="RefSeq" id="NP_389860.2">
    <property type="nucleotide sequence ID" value="NC_000964.3"/>
</dbReference>
<dbReference type="RefSeq" id="WP_004399421.1">
    <property type="nucleotide sequence ID" value="NZ_OZ025638.1"/>
</dbReference>
<dbReference type="SMR" id="P42090"/>
<dbReference type="FunCoup" id="P42090">
    <property type="interactions" value="45"/>
</dbReference>
<dbReference type="STRING" id="224308.BSU19790"/>
<dbReference type="PaxDb" id="224308-BSU19790"/>
<dbReference type="EnsemblBacteria" id="CAB13870">
    <property type="protein sequence ID" value="CAB13870"/>
    <property type="gene ID" value="BSU_19790"/>
</dbReference>
<dbReference type="GeneID" id="940061"/>
<dbReference type="KEGG" id="bsu:BSU19790"/>
<dbReference type="PATRIC" id="fig|224308.179.peg.2168"/>
<dbReference type="eggNOG" id="COG4641">
    <property type="taxonomic scope" value="Bacteria"/>
</dbReference>
<dbReference type="InParanoid" id="P42090"/>
<dbReference type="OrthoDB" id="110463at2"/>
<dbReference type="PhylomeDB" id="P42090"/>
<dbReference type="BioCyc" id="BSUB:BSU19790-MONOMER"/>
<dbReference type="Proteomes" id="UP000001570">
    <property type="component" value="Chromosome"/>
</dbReference>
<dbReference type="InterPro" id="IPR024542">
    <property type="entry name" value="DUF3880"/>
</dbReference>
<dbReference type="InterPro" id="IPR055259">
    <property type="entry name" value="YkvP/CgeB_Glyco_trans-like"/>
</dbReference>
<dbReference type="Pfam" id="PF12996">
    <property type="entry name" value="DUF3880"/>
    <property type="match status" value="1"/>
</dbReference>
<dbReference type="Pfam" id="PF13524">
    <property type="entry name" value="Glyco_trans_1_2"/>
    <property type="match status" value="1"/>
</dbReference>
<dbReference type="SUPFAM" id="SSF53756">
    <property type="entry name" value="UDP-Glycosyltransferase/glycogen phosphorylase"/>
    <property type="match status" value="1"/>
</dbReference>
<comment type="function">
    <text evidence="1 2 3">May be involved in maturation of the outermost layer of the spore (PubMed:7592393). May act as a glycosyltransferase that contributes to the glycosylation state of the spore (PubMed:30582883, PubMed:31502725).</text>
</comment>
<comment type="induction">
    <text evidence="3">Expression is GerE-dependent.</text>
</comment>
<comment type="disruption phenotype">
    <text evidence="1">Spores produced by the deletion mutant are more hydrophobic than wild-type spores and lack the polysaccharides layer (PubMed:30582883). Mutant spores do not have a crust (PubMed:30582883).</text>
</comment>
<comment type="caution">
    <text evidence="5">It is uncertain whether Met-1, Met-44 or Met-88 is the initiator.</text>
</comment>
<feature type="chain" id="PRO_0000089596" description="Spore protein CgeB">
    <location>
        <begin position="1"/>
        <end position="317"/>
    </location>
</feature>
<feature type="sequence conflict" description="In Ref. 1; AAA87721 and 2; AAB72058/AAB81149." evidence="5" ref="1 2">
    <original>A</original>
    <variation>R</variation>
    <location>
        <position position="247"/>
    </location>
</feature>
<accession>P42090</accession>
<protein>
    <recommendedName>
        <fullName>Spore protein CgeB</fullName>
    </recommendedName>
</protein>
<sequence>MKVLYIQSGYGGIYSYFDRWAEECFQNTHTEYMIADKPEAESLMKIEAFQPDFTLMMVGDRVPHDWLTWLKGKDIPVYVWLTEDPFYMDISLQVIKLADAILTIEQNAALYYQELGYQNVYYVPIPVNHRLFKKMGTEHSYHSNLLIIGYPYPNRVQLMKEAVHLPFTVRVIGKEWGKYLPKKVLKQPHIDVVSTWVPPEQAVHYYNGADIVINAHRPYHFAFNQNTMRIKNASFNNRTFDIAACEAFQLTDLPAAHPFSSIISYHGMNDFKEKAAFYINHPEERQKAAAANYKETVPAFTFDELPAKLKAIHLALS</sequence>
<evidence type="ECO:0000269" key="1">
    <source>
    </source>
</evidence>
<evidence type="ECO:0000269" key="2">
    <source>
    </source>
</evidence>
<evidence type="ECO:0000269" key="3">
    <source>
    </source>
</evidence>
<evidence type="ECO:0000303" key="4">
    <source>
    </source>
</evidence>
<evidence type="ECO:0000305" key="5"/>
<evidence type="ECO:0000312" key="6">
    <source>
        <dbReference type="EMBL" id="AAA87721.1"/>
    </source>
</evidence>
<evidence type="ECO:0000312" key="7">
    <source>
        <dbReference type="EMBL" id="AAB72058.1"/>
    </source>
</evidence>
<evidence type="ECO:0000312" key="8">
    <source>
        <dbReference type="EMBL" id="AAB81149.1"/>
    </source>
</evidence>
<evidence type="ECO:0000312" key="9">
    <source>
        <dbReference type="EMBL" id="CAB13870.2"/>
    </source>
</evidence>
<proteinExistence type="evidence at transcript level"/>
<keyword id="KW-1185">Reference proteome</keyword>
<name>CGEB_BACSU</name>
<reference evidence="6" key="1">
    <citation type="journal article" date="1995" name="J. Bacteriol.">
        <title>Adjacent and divergently oriented operons under the control of the sporulation regulatory protein GerE in Bacillus subtilis.</title>
        <authorList>
            <person name="Roels S."/>
            <person name="Losick R."/>
        </authorList>
    </citation>
    <scope>NUCLEOTIDE SEQUENCE [GENOMIC DNA]</scope>
    <scope>FUNCTION</scope>
    <scope>TRANSCRIPTIONAL REGULATION BY GERE</scope>
    <source>
        <strain>168</strain>
    </source>
</reference>
<reference evidence="7 8" key="2">
    <citation type="journal article" date="1998" name="DNA Res.">
        <title>Sequence analysis of the Bacillus subtilis 168 chromosome region between the sspC and odhA loci (184 degrees-180 degrees).</title>
        <authorList>
            <person name="Ghim S.-Y."/>
            <person name="Choi S.-K."/>
            <person name="Shin B.-S."/>
            <person name="Jeong Y.-M."/>
            <person name="Sorokin A."/>
            <person name="Ehrlich S.D."/>
            <person name="Park S.-H."/>
        </authorList>
    </citation>
    <scope>NUCLEOTIDE SEQUENCE [GENOMIC DNA]</scope>
    <source>
        <strain>168</strain>
    </source>
</reference>
<reference evidence="9" key="3">
    <citation type="journal article" date="1997" name="Nature">
        <title>The complete genome sequence of the Gram-positive bacterium Bacillus subtilis.</title>
        <authorList>
            <person name="Kunst F."/>
            <person name="Ogasawara N."/>
            <person name="Moszer I."/>
            <person name="Albertini A.M."/>
            <person name="Alloni G."/>
            <person name="Azevedo V."/>
            <person name="Bertero M.G."/>
            <person name="Bessieres P."/>
            <person name="Bolotin A."/>
            <person name="Borchert S."/>
            <person name="Borriss R."/>
            <person name="Boursier L."/>
            <person name="Brans A."/>
            <person name="Braun M."/>
            <person name="Brignell S.C."/>
            <person name="Bron S."/>
            <person name="Brouillet S."/>
            <person name="Bruschi C.V."/>
            <person name="Caldwell B."/>
            <person name="Capuano V."/>
            <person name="Carter N.M."/>
            <person name="Choi S.-K."/>
            <person name="Codani J.-J."/>
            <person name="Connerton I.F."/>
            <person name="Cummings N.J."/>
            <person name="Daniel R.A."/>
            <person name="Denizot F."/>
            <person name="Devine K.M."/>
            <person name="Duesterhoeft A."/>
            <person name="Ehrlich S.D."/>
            <person name="Emmerson P.T."/>
            <person name="Entian K.-D."/>
            <person name="Errington J."/>
            <person name="Fabret C."/>
            <person name="Ferrari E."/>
            <person name="Foulger D."/>
            <person name="Fritz C."/>
            <person name="Fujita M."/>
            <person name="Fujita Y."/>
            <person name="Fuma S."/>
            <person name="Galizzi A."/>
            <person name="Galleron N."/>
            <person name="Ghim S.-Y."/>
            <person name="Glaser P."/>
            <person name="Goffeau A."/>
            <person name="Golightly E.J."/>
            <person name="Grandi G."/>
            <person name="Guiseppi G."/>
            <person name="Guy B.J."/>
            <person name="Haga K."/>
            <person name="Haiech J."/>
            <person name="Harwood C.R."/>
            <person name="Henaut A."/>
            <person name="Hilbert H."/>
            <person name="Holsappel S."/>
            <person name="Hosono S."/>
            <person name="Hullo M.-F."/>
            <person name="Itaya M."/>
            <person name="Jones L.-M."/>
            <person name="Joris B."/>
            <person name="Karamata D."/>
            <person name="Kasahara Y."/>
            <person name="Klaerr-Blanchard M."/>
            <person name="Klein C."/>
            <person name="Kobayashi Y."/>
            <person name="Koetter P."/>
            <person name="Koningstein G."/>
            <person name="Krogh S."/>
            <person name="Kumano M."/>
            <person name="Kurita K."/>
            <person name="Lapidus A."/>
            <person name="Lardinois S."/>
            <person name="Lauber J."/>
            <person name="Lazarevic V."/>
            <person name="Lee S.-M."/>
            <person name="Levine A."/>
            <person name="Liu H."/>
            <person name="Masuda S."/>
            <person name="Mauel C."/>
            <person name="Medigue C."/>
            <person name="Medina N."/>
            <person name="Mellado R.P."/>
            <person name="Mizuno M."/>
            <person name="Moestl D."/>
            <person name="Nakai S."/>
            <person name="Noback M."/>
            <person name="Noone D."/>
            <person name="O'Reilly M."/>
            <person name="Ogawa K."/>
            <person name="Ogiwara A."/>
            <person name="Oudega B."/>
            <person name="Park S.-H."/>
            <person name="Parro V."/>
            <person name="Pohl T.M."/>
            <person name="Portetelle D."/>
            <person name="Porwollik S."/>
            <person name="Prescott A.M."/>
            <person name="Presecan E."/>
            <person name="Pujic P."/>
            <person name="Purnelle B."/>
            <person name="Rapoport G."/>
            <person name="Rey M."/>
            <person name="Reynolds S."/>
            <person name="Rieger M."/>
            <person name="Rivolta C."/>
            <person name="Rocha E."/>
            <person name="Roche B."/>
            <person name="Rose M."/>
            <person name="Sadaie Y."/>
            <person name="Sato T."/>
            <person name="Scanlan E."/>
            <person name="Schleich S."/>
            <person name="Schroeter R."/>
            <person name="Scoffone F."/>
            <person name="Sekiguchi J."/>
            <person name="Sekowska A."/>
            <person name="Seror S.J."/>
            <person name="Serror P."/>
            <person name="Shin B.-S."/>
            <person name="Soldo B."/>
            <person name="Sorokin A."/>
            <person name="Tacconi E."/>
            <person name="Takagi T."/>
            <person name="Takahashi H."/>
            <person name="Takemaru K."/>
            <person name="Takeuchi M."/>
            <person name="Tamakoshi A."/>
            <person name="Tanaka T."/>
            <person name="Terpstra P."/>
            <person name="Tognoni A."/>
            <person name="Tosato V."/>
            <person name="Uchiyama S."/>
            <person name="Vandenbol M."/>
            <person name="Vannier F."/>
            <person name="Vassarotti A."/>
            <person name="Viari A."/>
            <person name="Wambutt R."/>
            <person name="Wedler E."/>
            <person name="Wedler H."/>
            <person name="Weitzenegger T."/>
            <person name="Winters P."/>
            <person name="Wipat A."/>
            <person name="Yamamoto H."/>
            <person name="Yamane K."/>
            <person name="Yasumoto K."/>
            <person name="Yata K."/>
            <person name="Yoshida K."/>
            <person name="Yoshikawa H.-F."/>
            <person name="Zumstein E."/>
            <person name="Yoshikawa H."/>
            <person name="Danchin A."/>
        </authorList>
    </citation>
    <scope>NUCLEOTIDE SEQUENCE [LARGE SCALE GENOMIC DNA]</scope>
    <source>
        <strain>168</strain>
    </source>
</reference>
<reference key="4">
    <citation type="journal article" date="2009" name="Microbiology">
        <title>From a consortium sequence to a unified sequence: the Bacillus subtilis 168 reference genome a decade later.</title>
        <authorList>
            <person name="Barbe V."/>
            <person name="Cruveiller S."/>
            <person name="Kunst F."/>
            <person name="Lenoble P."/>
            <person name="Meurice G."/>
            <person name="Sekowska A."/>
            <person name="Vallenet D."/>
            <person name="Wang T."/>
            <person name="Moszer I."/>
            <person name="Medigue C."/>
            <person name="Danchin A."/>
        </authorList>
    </citation>
    <scope>SEQUENCE REVISION TO 247</scope>
</reference>
<reference key="5">
    <citation type="journal article" date="2019" name="Mol. Microbiol.">
        <title>Contributions of crust proteins to spore surface properties in Bacillus subtilis.</title>
        <authorList>
            <person name="Shuster B."/>
            <person name="Khemmani M."/>
            <person name="Abe K."/>
            <person name="Huang X."/>
            <person name="Nakaya Y."/>
            <person name="Maryn N."/>
            <person name="Buttar S."/>
            <person name="Gonzalez A.N."/>
            <person name="Driks A."/>
            <person name="Sato T."/>
            <person name="Eichenberger P."/>
        </authorList>
    </citation>
    <scope>FUNCTION</scope>
    <scope>DISRUPTION PHENOTYPE</scope>
</reference>
<reference key="6">
    <citation type="journal article" date="2019" name="Mol. Microbiol.">
        <title>The Bacillus subtilis endospore crust: protein interaction network, architecture and glycosylation state of a potential glycoprotein layer.</title>
        <authorList>
            <person name="Bartels J."/>
            <person name="Blueher A."/>
            <person name="Lopez Castellanos S."/>
            <person name="Richter M."/>
            <person name="Guenther M."/>
            <person name="Mascher T."/>
        </authorList>
    </citation>
    <scope>FUNCTION</scope>
</reference>
<gene>
    <name evidence="4" type="primary">cgeB</name>
    <name type="synonym">cgeAB</name>
    <name evidence="9" type="ordered locus">BSU19790</name>
</gene>
<organism>
    <name type="scientific">Bacillus subtilis (strain 168)</name>
    <dbReference type="NCBI Taxonomy" id="224308"/>
    <lineage>
        <taxon>Bacteria</taxon>
        <taxon>Bacillati</taxon>
        <taxon>Bacillota</taxon>
        <taxon>Bacilli</taxon>
        <taxon>Bacillales</taxon>
        <taxon>Bacillaceae</taxon>
        <taxon>Bacillus</taxon>
    </lineage>
</organism>